<organism>
    <name type="scientific">Homo sapiens</name>
    <name type="common">Human</name>
    <dbReference type="NCBI Taxonomy" id="9606"/>
    <lineage>
        <taxon>Eukaryota</taxon>
        <taxon>Metazoa</taxon>
        <taxon>Chordata</taxon>
        <taxon>Craniata</taxon>
        <taxon>Vertebrata</taxon>
        <taxon>Euteleostomi</taxon>
        <taxon>Mammalia</taxon>
        <taxon>Eutheria</taxon>
        <taxon>Euarchontoglires</taxon>
        <taxon>Primates</taxon>
        <taxon>Haplorrhini</taxon>
        <taxon>Catarrhini</taxon>
        <taxon>Hominidae</taxon>
        <taxon>Homo</taxon>
    </lineage>
</organism>
<name>IGSF3_HUMAN</name>
<proteinExistence type="evidence at protein level"/>
<comment type="subcellular location">
    <subcellularLocation>
        <location evidence="7">Membrane</location>
        <topology evidence="7">Single-pass type I membrane protein</topology>
    </subcellularLocation>
</comment>
<comment type="alternative products">
    <event type="alternative splicing"/>
    <isoform>
        <id>O75054-1</id>
        <name>1</name>
        <sequence type="displayed"/>
    </isoform>
    <isoform>
        <id>O75054-2</id>
        <name>2</name>
        <sequence type="described" ref="VSP_031609"/>
    </isoform>
</comment>
<comment type="tissue specificity">
    <text evidence="5">Expressed in a wide range of tissues with High expression in Placenta, kidney and lung.</text>
</comment>
<comment type="disease" evidence="4">
    <disease id="DI-04319">
        <name>Lacrimal duct defect</name>
        <acronym>LCDD</acronym>
        <description>A condition resulting in the imbalance between tear production and tear drainage. Infants typically manifest persistent epiphora and/or recurrent infections of the lacrimal pathway, such as conjunctivitis. LCDD is caused by failure of the nasolacrimal duct to open into the inferior meatus.</description>
        <dbReference type="MIM" id="149700"/>
    </disease>
    <text>The disease is caused by variants affecting the gene represented in this entry.</text>
</comment>
<comment type="miscellaneous">
    <text>Likely interchromosomal Alu-mediated fusion between IGSF3 on 1p13.1 and GGT on 22q11.2. Breakpoints occurred inside Alu elements as well as in the 5' or 3' ends of them.</text>
</comment>
<comment type="sequence caution" evidence="7">
    <conflict type="frameshift">
        <sequence resource="EMBL-CDS" id="AAC72013"/>
    </conflict>
</comment>
<comment type="sequence caution" evidence="7">
    <conflict type="erroneous initiation">
        <sequence resource="EMBL-CDS" id="BAA32311"/>
    </conflict>
    <text>Extended N-terminus.</text>
</comment>
<protein>
    <recommendedName>
        <fullName>Immunoglobulin superfamily member 3</fullName>
        <shortName>IgSF3</shortName>
    </recommendedName>
    <alternativeName>
        <fullName>Glu-Trp-Ile EWI motif-containing protein 3</fullName>
        <shortName>EWI-3</shortName>
    </alternativeName>
</protein>
<sequence length="1194" mass="135196">MKCFFPVLSCLAVLGVVSAQRQVTVQEGPLYRTEGSHITIWCNVSGYQGPSEQNFQWSIYLPSSPEREVQIVSTMDSSFPYAIYTQRVRGGKIFIERVQGNSTLLHITDLQARDAGEYECHTPSTDKQYFGSYSAKMNLVVIPDSLQTTAMPQTLHRVEQDPLELTCEVASETIQHSHLSVAWLRQKVGEKPVEVISLSRDFMLHSSSEYAQRQSLGEVRLDKLGRTTFRLTIFHLQPSDQGEFYCEAAEWIQDPDGSWYAMTRKRSEGAVVNVQPTDKEFTVRLETEKRLHTVGEPVEFRCILEAQNVPDRYFAVSWAFNSSLIATMGPNAVPVLNSEFAHREARGQLKVAKESDSVFVLKIYHLRQEDSGKYNCRVTEREKTVTGEFIDKESKRPKNIPIIVLPLKSSISVEVASNASVILEGEDLRFSCSVRTAGRPQGRFSVIWQLVDRQNRRSNIMWLDRDGTVQPGSSYWERSSFGGVQMEQVQPNSFSLGIFNSRKEDEGQYECHVTEWVRAVDGEWQIVGERRASTPISITALEMGFAVTAISRTPGVTYSDSFDLQCIIKPHYPAWVPVSVTWRFQPVGTVEFHDLVTFTRDGGVQWGDRSSSFRTRTAIEKAESSNNVRLSISRASDTEAGKYQCVAELWRKNYNNTWTRLAERTSNLLEIRVLQPVTKLQVSKSKRTLTLVENKPIQLNCSVKSQTSQNSHFAVLWYVHKPSDADGKLILKTTHNSAFEYGTYAEEEGLRARLQFERHVSGGLFSLTVQRAEVSDSGSYYCHVEEWLLSPNYAWYKLAEEVSGRTEVTVKQPDSRLRLSQAQGNLSVLETRQVQLECVVLNRTSITSQLMVEWFVWKPNHPERETVARLSRDATFHYGEQAAKNNLKGRLHLESPSPGVYRLFIQNVAVQDSGTYSCHVEEWLPSPSGMWYKRAEDTAGQTALTVMRPDASLQVDTVVPNATVSEKAAFQLDCSIVSRSSQDSRFAVAWYSLRTKAGGKRSSPGLEEQEEEREEEEEEDDDDDDDPTERTALLSVGPDAVFGPEGSPWEGRLRFQRLSPVLYRLTVLQASPQDTGNYSCHVEEWLPSPQKEWYRLTEEESAPIGIRVLDTSPTLQSIICSNDALFYFVFFYPFPIFGILIITILLVRFKSRNSSKNSDGKNGVPLLWIKEPHLNYSPTCLEPPVLSIHPGAID</sequence>
<accession>O75054</accession>
<accession>A6NJZ6</accession>
<accession>A6NMC7</accession>
<reference key="1">
    <citation type="journal article" date="1998" name="Genomics">
        <title>Molecular cloning of a human cDNA IGSF3 encoding an immunoglobulin-like membrane protein: expression and mapping to chromosome band 1p13.</title>
        <authorList>
            <person name="Saupe S."/>
            <person name="Roizes G."/>
            <person name="Peter M."/>
            <person name="Boyle S."/>
            <person name="Gardiner K."/>
            <person name="De Sario A."/>
        </authorList>
    </citation>
    <scope>NUCLEOTIDE SEQUENCE [MRNA] (ISOFORM 2)</scope>
    <scope>TISSUE SPECIFICITY</scope>
    <scope>VARIANT GLU-1020</scope>
</reference>
<reference key="2">
    <citation type="journal article" date="1997" name="DNA Res.">
        <title>Characterization of cDNA clones in size-fractionated cDNA libraries from human brain.</title>
        <authorList>
            <person name="Seki N."/>
            <person name="Ohira M."/>
            <person name="Nagase T."/>
            <person name="Ishikawa K."/>
            <person name="Miyajima N."/>
            <person name="Nakajima D."/>
            <person name="Nomura N."/>
            <person name="Ohara O."/>
        </authorList>
    </citation>
    <scope>NUCLEOTIDE SEQUENCE [LARGE SCALE MRNA] (ISOFORM 1)</scope>
    <source>
        <tissue>Brain</tissue>
    </source>
</reference>
<reference key="3">
    <citation type="journal article" date="2002" name="DNA Res.">
        <title>Construction of expression-ready cDNA clones for KIAA genes: manual curation of 330 KIAA cDNA clones.</title>
        <authorList>
            <person name="Nakajima D."/>
            <person name="Okazaki N."/>
            <person name="Yamakawa H."/>
            <person name="Kikuno R."/>
            <person name="Ohara O."/>
            <person name="Nagase T."/>
        </authorList>
    </citation>
    <scope>SEQUENCE REVISION</scope>
</reference>
<reference key="4">
    <citation type="journal article" date="2006" name="Nature">
        <title>The DNA sequence and biological annotation of human chromosome 1.</title>
        <authorList>
            <person name="Gregory S.G."/>
            <person name="Barlow K.F."/>
            <person name="McLay K.E."/>
            <person name="Kaul R."/>
            <person name="Swarbreck D."/>
            <person name="Dunham A."/>
            <person name="Scott C.E."/>
            <person name="Howe K.L."/>
            <person name="Woodfine K."/>
            <person name="Spencer C.C.A."/>
            <person name="Jones M.C."/>
            <person name="Gillson C."/>
            <person name="Searle S."/>
            <person name="Zhou Y."/>
            <person name="Kokocinski F."/>
            <person name="McDonald L."/>
            <person name="Evans R."/>
            <person name="Phillips K."/>
            <person name="Atkinson A."/>
            <person name="Cooper R."/>
            <person name="Jones C."/>
            <person name="Hall R.E."/>
            <person name="Andrews T.D."/>
            <person name="Lloyd C."/>
            <person name="Ainscough R."/>
            <person name="Almeida J.P."/>
            <person name="Ambrose K.D."/>
            <person name="Anderson F."/>
            <person name="Andrew R.W."/>
            <person name="Ashwell R.I.S."/>
            <person name="Aubin K."/>
            <person name="Babbage A.K."/>
            <person name="Bagguley C.L."/>
            <person name="Bailey J."/>
            <person name="Beasley H."/>
            <person name="Bethel G."/>
            <person name="Bird C.P."/>
            <person name="Bray-Allen S."/>
            <person name="Brown J.Y."/>
            <person name="Brown A.J."/>
            <person name="Buckley D."/>
            <person name="Burton J."/>
            <person name="Bye J."/>
            <person name="Carder C."/>
            <person name="Chapman J.C."/>
            <person name="Clark S.Y."/>
            <person name="Clarke G."/>
            <person name="Clee C."/>
            <person name="Cobley V."/>
            <person name="Collier R.E."/>
            <person name="Corby N."/>
            <person name="Coville G.J."/>
            <person name="Davies J."/>
            <person name="Deadman R."/>
            <person name="Dunn M."/>
            <person name="Earthrowl M."/>
            <person name="Ellington A.G."/>
            <person name="Errington H."/>
            <person name="Frankish A."/>
            <person name="Frankland J."/>
            <person name="French L."/>
            <person name="Garner P."/>
            <person name="Garnett J."/>
            <person name="Gay L."/>
            <person name="Ghori M.R.J."/>
            <person name="Gibson R."/>
            <person name="Gilby L.M."/>
            <person name="Gillett W."/>
            <person name="Glithero R.J."/>
            <person name="Grafham D.V."/>
            <person name="Griffiths C."/>
            <person name="Griffiths-Jones S."/>
            <person name="Grocock R."/>
            <person name="Hammond S."/>
            <person name="Harrison E.S.I."/>
            <person name="Hart E."/>
            <person name="Haugen E."/>
            <person name="Heath P.D."/>
            <person name="Holmes S."/>
            <person name="Holt K."/>
            <person name="Howden P.J."/>
            <person name="Hunt A.R."/>
            <person name="Hunt S.E."/>
            <person name="Hunter G."/>
            <person name="Isherwood J."/>
            <person name="James R."/>
            <person name="Johnson C."/>
            <person name="Johnson D."/>
            <person name="Joy A."/>
            <person name="Kay M."/>
            <person name="Kershaw J.K."/>
            <person name="Kibukawa M."/>
            <person name="Kimberley A.M."/>
            <person name="King A."/>
            <person name="Knights A.J."/>
            <person name="Lad H."/>
            <person name="Laird G."/>
            <person name="Lawlor S."/>
            <person name="Leongamornlert D.A."/>
            <person name="Lloyd D.M."/>
            <person name="Loveland J."/>
            <person name="Lovell J."/>
            <person name="Lush M.J."/>
            <person name="Lyne R."/>
            <person name="Martin S."/>
            <person name="Mashreghi-Mohammadi M."/>
            <person name="Matthews L."/>
            <person name="Matthews N.S.W."/>
            <person name="McLaren S."/>
            <person name="Milne S."/>
            <person name="Mistry S."/>
            <person name="Moore M.J.F."/>
            <person name="Nickerson T."/>
            <person name="O'Dell C.N."/>
            <person name="Oliver K."/>
            <person name="Palmeiri A."/>
            <person name="Palmer S.A."/>
            <person name="Parker A."/>
            <person name="Patel D."/>
            <person name="Pearce A.V."/>
            <person name="Peck A.I."/>
            <person name="Pelan S."/>
            <person name="Phelps K."/>
            <person name="Phillimore B.J."/>
            <person name="Plumb R."/>
            <person name="Rajan J."/>
            <person name="Raymond C."/>
            <person name="Rouse G."/>
            <person name="Saenphimmachak C."/>
            <person name="Sehra H.K."/>
            <person name="Sheridan E."/>
            <person name="Shownkeen R."/>
            <person name="Sims S."/>
            <person name="Skuce C.D."/>
            <person name="Smith M."/>
            <person name="Steward C."/>
            <person name="Subramanian S."/>
            <person name="Sycamore N."/>
            <person name="Tracey A."/>
            <person name="Tromans A."/>
            <person name="Van Helmond Z."/>
            <person name="Wall M."/>
            <person name="Wallis J.M."/>
            <person name="White S."/>
            <person name="Whitehead S.L."/>
            <person name="Wilkinson J.E."/>
            <person name="Willey D.L."/>
            <person name="Williams H."/>
            <person name="Wilming L."/>
            <person name="Wray P.W."/>
            <person name="Wu Z."/>
            <person name="Coulson A."/>
            <person name="Vaudin M."/>
            <person name="Sulston J.E."/>
            <person name="Durbin R.M."/>
            <person name="Hubbard T."/>
            <person name="Wooster R."/>
            <person name="Dunham I."/>
            <person name="Carter N.P."/>
            <person name="McVean G."/>
            <person name="Ross M.T."/>
            <person name="Harrow J."/>
            <person name="Olson M.V."/>
            <person name="Beck S."/>
            <person name="Rogers J."/>
            <person name="Bentley D.R."/>
        </authorList>
    </citation>
    <scope>NUCLEOTIDE SEQUENCE [LARGE SCALE GENOMIC DNA]</scope>
</reference>
<reference key="5">
    <citation type="journal article" date="2001" name="J. Biol. Chem.">
        <title>EWI-2 is a major CD9 and CD81 partner and member of a novel Ig protein subfamily.</title>
        <authorList>
            <person name="Stipp C.S."/>
            <person name="Kolesnikova T.V."/>
            <person name="Hemler M.E."/>
        </authorList>
    </citation>
    <scope>DOMAIN EWI MOTIF</scope>
</reference>
<reference key="6">
    <citation type="journal article" date="2003" name="Genome Res.">
        <title>Shuffling of genes within low-copy repeats on 22q11 (LCR22) by Alu-mediated recombination events during evolution.</title>
        <authorList>
            <person name="Babcock M."/>
            <person name="Pavlicek A."/>
            <person name="Spiteri E."/>
            <person name="Kashork C.D."/>
            <person name="Ioshikhes I."/>
            <person name="Shaffer L.G."/>
            <person name="Jurka J."/>
            <person name="Morrow B.E."/>
        </authorList>
    </citation>
    <scope>BREAKPOINTS</scope>
</reference>
<reference key="7">
    <citation type="journal article" date="2014" name="Clin. Genet.">
        <title>Identification of an IGSF3 mutation in a family with congenital nasolacrimal duct obstruction.</title>
        <authorList>
            <person name="Foster J."/>
            <person name="Kapoor S."/>
            <person name="Diaz-Horta O."/>
            <person name="Singh A."/>
            <person name="Abad C."/>
            <person name="Rastogi A."/>
            <person name="Moharana R."/>
            <person name="Tekeli O."/>
            <person name="Walz K."/>
            <person name="Tekin M."/>
        </authorList>
    </citation>
    <scope>INVOLVEMENT IN LCDD</scope>
</reference>
<dbReference type="EMBL" id="AF031174">
    <property type="protein sequence ID" value="AAC72013.1"/>
    <property type="status" value="ALT_FRAME"/>
    <property type="molecule type" value="mRNA"/>
</dbReference>
<dbReference type="EMBL" id="AB007935">
    <property type="protein sequence ID" value="BAA32311.2"/>
    <property type="status" value="ALT_INIT"/>
    <property type="molecule type" value="mRNA"/>
</dbReference>
<dbReference type="EMBL" id="AL355794">
    <property type="status" value="NOT_ANNOTATED_CDS"/>
    <property type="molecule type" value="Genomic_DNA"/>
</dbReference>
<dbReference type="EMBL" id="AL356748">
    <property type="status" value="NOT_ANNOTATED_CDS"/>
    <property type="molecule type" value="Genomic_DNA"/>
</dbReference>
<dbReference type="CCDS" id="CCDS30813.1">
    <molecule id="O75054-1"/>
</dbReference>
<dbReference type="CCDS" id="CCDS30814.1">
    <molecule id="O75054-2"/>
</dbReference>
<dbReference type="RefSeq" id="NP_001007238.1">
    <molecule id="O75054-1"/>
    <property type="nucleotide sequence ID" value="NM_001007237.3"/>
</dbReference>
<dbReference type="RefSeq" id="NP_001533.2">
    <molecule id="O75054-2"/>
    <property type="nucleotide sequence ID" value="NM_001542.4"/>
</dbReference>
<dbReference type="RefSeq" id="XP_005270850.1">
    <property type="nucleotide sequence ID" value="XM_005270793.2"/>
</dbReference>
<dbReference type="RefSeq" id="XP_011539617.1">
    <molecule id="O75054-2"/>
    <property type="nucleotide sequence ID" value="XM_011541315.2"/>
</dbReference>
<dbReference type="RefSeq" id="XP_047275026.1">
    <molecule id="O75054-1"/>
    <property type="nucleotide sequence ID" value="XM_047419070.1"/>
</dbReference>
<dbReference type="BioGRID" id="109553">
    <property type="interactions" value="79"/>
</dbReference>
<dbReference type="FunCoup" id="O75054">
    <property type="interactions" value="418"/>
</dbReference>
<dbReference type="IntAct" id="O75054">
    <property type="interactions" value="42"/>
</dbReference>
<dbReference type="MINT" id="O75054"/>
<dbReference type="STRING" id="9606.ENSP00000358495"/>
<dbReference type="GlyConnect" id="1392">
    <property type="glycosylation" value="2 N-Linked glycans (2 sites)"/>
</dbReference>
<dbReference type="GlyCosmos" id="O75054">
    <property type="glycosylation" value="6 sites, 2 glycans"/>
</dbReference>
<dbReference type="GlyGen" id="O75054">
    <property type="glycosylation" value="11 sites, 14 N-linked glycans (8 sites), 1 O-linked glycan (1 site)"/>
</dbReference>
<dbReference type="iPTMnet" id="O75054"/>
<dbReference type="PhosphoSitePlus" id="O75054"/>
<dbReference type="SwissPalm" id="O75054"/>
<dbReference type="BioMuta" id="IGSF3"/>
<dbReference type="jPOST" id="O75054"/>
<dbReference type="MassIVE" id="O75054"/>
<dbReference type="PaxDb" id="9606-ENSP00000358495"/>
<dbReference type="PeptideAtlas" id="O75054"/>
<dbReference type="ProteomicsDB" id="1365"/>
<dbReference type="ProteomicsDB" id="49728">
    <molecule id="O75054-1"/>
</dbReference>
<dbReference type="ProteomicsDB" id="49729">
    <molecule id="O75054-2"/>
</dbReference>
<dbReference type="Pumba" id="O75054"/>
<dbReference type="Antibodypedia" id="46948">
    <property type="antibodies" value="176 antibodies from 27 providers"/>
</dbReference>
<dbReference type="DNASU" id="3321"/>
<dbReference type="Ensembl" id="ENST00000318837.6">
    <molecule id="O75054-2"/>
    <property type="protein sequence ID" value="ENSP00000321184.6"/>
    <property type="gene ID" value="ENSG00000143061.18"/>
</dbReference>
<dbReference type="Ensembl" id="ENST00000369483.5">
    <molecule id="O75054-2"/>
    <property type="protein sequence ID" value="ENSP00000358495.1"/>
    <property type="gene ID" value="ENSG00000143061.18"/>
</dbReference>
<dbReference type="Ensembl" id="ENST00000369486.8">
    <molecule id="O75054-1"/>
    <property type="protein sequence ID" value="ENSP00000358498.4"/>
    <property type="gene ID" value="ENSG00000143061.18"/>
</dbReference>
<dbReference type="GeneID" id="3321"/>
<dbReference type="KEGG" id="hsa:3321"/>
<dbReference type="MANE-Select" id="ENST00000369486.8">
    <property type="protein sequence ID" value="ENSP00000358498.4"/>
    <property type="RefSeq nucleotide sequence ID" value="NM_001007237.3"/>
    <property type="RefSeq protein sequence ID" value="NP_001007238.1"/>
</dbReference>
<dbReference type="UCSC" id="uc001egr.3">
    <molecule id="O75054-1"/>
    <property type="organism name" value="human"/>
</dbReference>
<dbReference type="AGR" id="HGNC:5950"/>
<dbReference type="CTD" id="3321"/>
<dbReference type="DisGeNET" id="3321"/>
<dbReference type="GeneCards" id="IGSF3"/>
<dbReference type="HGNC" id="HGNC:5950">
    <property type="gene designation" value="IGSF3"/>
</dbReference>
<dbReference type="HPA" id="ENSG00000143061">
    <property type="expression patterns" value="Low tissue specificity"/>
</dbReference>
<dbReference type="MalaCards" id="IGSF3"/>
<dbReference type="MIM" id="149700">
    <property type="type" value="phenotype"/>
</dbReference>
<dbReference type="MIM" id="603491">
    <property type="type" value="gene"/>
</dbReference>
<dbReference type="neXtProt" id="NX_O75054"/>
<dbReference type="OpenTargets" id="ENSG00000143061"/>
<dbReference type="Orphanet" id="451612">
    <property type="disease" value="Familial congenital nasolacrimal duct obstruction"/>
</dbReference>
<dbReference type="PharmGKB" id="PA29763"/>
<dbReference type="VEuPathDB" id="HostDB:ENSG00000143061"/>
<dbReference type="eggNOG" id="ENOG502QRRB">
    <property type="taxonomic scope" value="Eukaryota"/>
</dbReference>
<dbReference type="GeneTree" id="ENSGT00940000155177"/>
<dbReference type="HOGENOM" id="CLU_005187_0_0_1"/>
<dbReference type="InParanoid" id="O75054"/>
<dbReference type="OMA" id="PVSVVWQ"/>
<dbReference type="OrthoDB" id="9890427at2759"/>
<dbReference type="PAN-GO" id="O75054">
    <property type="GO annotations" value="1 GO annotation based on evolutionary models"/>
</dbReference>
<dbReference type="PhylomeDB" id="O75054"/>
<dbReference type="TreeFam" id="TF332702"/>
<dbReference type="PathwayCommons" id="O75054"/>
<dbReference type="SignaLink" id="O75054"/>
<dbReference type="BioGRID-ORCS" id="3321">
    <property type="hits" value="89 hits in 1160 CRISPR screens"/>
</dbReference>
<dbReference type="ChiTaRS" id="IGSF3">
    <property type="organism name" value="human"/>
</dbReference>
<dbReference type="GenomeRNAi" id="3321"/>
<dbReference type="Pharos" id="O75054">
    <property type="development level" value="Tbio"/>
</dbReference>
<dbReference type="PRO" id="PR:O75054"/>
<dbReference type="Proteomes" id="UP000005640">
    <property type="component" value="Chromosome 1"/>
</dbReference>
<dbReference type="RNAct" id="O75054">
    <property type="molecule type" value="protein"/>
</dbReference>
<dbReference type="Bgee" id="ENSG00000143061">
    <property type="expression patterns" value="Expressed in cortical plate and 193 other cell types or tissues"/>
</dbReference>
<dbReference type="GO" id="GO:0009986">
    <property type="term" value="C:cell surface"/>
    <property type="evidence" value="ECO:0007005"/>
    <property type="project" value="UniProtKB"/>
</dbReference>
<dbReference type="GO" id="GO:0016020">
    <property type="term" value="C:membrane"/>
    <property type="evidence" value="ECO:0000318"/>
    <property type="project" value="GO_Central"/>
</dbReference>
<dbReference type="GO" id="GO:0032808">
    <property type="term" value="P:lacrimal gland development"/>
    <property type="evidence" value="ECO:0000315"/>
    <property type="project" value="UniProtKB"/>
</dbReference>
<dbReference type="CDD" id="cd00099">
    <property type="entry name" value="IgV"/>
    <property type="match status" value="1"/>
</dbReference>
<dbReference type="FunFam" id="2.60.40.10:FF:000191">
    <property type="entry name" value="Immunoglobulin superfamily member 3"/>
    <property type="match status" value="1"/>
</dbReference>
<dbReference type="FunFam" id="2.60.40.10:FF:000674">
    <property type="entry name" value="Immunoglobulin superfamily member 3"/>
    <property type="match status" value="1"/>
</dbReference>
<dbReference type="FunFam" id="2.60.40.10:FF:000689">
    <property type="entry name" value="Immunoglobulin superfamily member 3"/>
    <property type="match status" value="1"/>
</dbReference>
<dbReference type="FunFam" id="2.60.40.10:FF:000827">
    <property type="entry name" value="Immunoglobulin superfamily member 3"/>
    <property type="match status" value="1"/>
</dbReference>
<dbReference type="FunFam" id="2.60.40.10:FF:000932">
    <property type="entry name" value="Immunoglobulin superfamily member 3"/>
    <property type="match status" value="1"/>
</dbReference>
<dbReference type="FunFam" id="2.60.40.10:FF:000604">
    <property type="entry name" value="immunoglobulin superfamily member 3"/>
    <property type="match status" value="1"/>
</dbReference>
<dbReference type="FunFam" id="2.60.40.10:FF:000491">
    <property type="entry name" value="Immunoglobulin superfamily, member 3"/>
    <property type="match status" value="1"/>
</dbReference>
<dbReference type="Gene3D" id="2.60.40.10">
    <property type="entry name" value="Immunoglobulins"/>
    <property type="match status" value="8"/>
</dbReference>
<dbReference type="InterPro" id="IPR007110">
    <property type="entry name" value="Ig-like_dom"/>
</dbReference>
<dbReference type="InterPro" id="IPR036179">
    <property type="entry name" value="Ig-like_dom_sf"/>
</dbReference>
<dbReference type="InterPro" id="IPR013783">
    <property type="entry name" value="Ig-like_fold"/>
</dbReference>
<dbReference type="InterPro" id="IPR003599">
    <property type="entry name" value="Ig_sub"/>
</dbReference>
<dbReference type="InterPro" id="IPR003598">
    <property type="entry name" value="Ig_sub2"/>
</dbReference>
<dbReference type="InterPro" id="IPR013106">
    <property type="entry name" value="Ig_V-set"/>
</dbReference>
<dbReference type="InterPro" id="IPR051102">
    <property type="entry name" value="IgSF_V-set/TM_domain"/>
</dbReference>
<dbReference type="PANTHER" id="PTHR12207">
    <property type="entry name" value="V-SET AND TRANSMEMBRANE DOMAIN-CONTAINING PROTEIN"/>
    <property type="match status" value="1"/>
</dbReference>
<dbReference type="Pfam" id="PF07686">
    <property type="entry name" value="V-set"/>
    <property type="match status" value="4"/>
</dbReference>
<dbReference type="SMART" id="SM00409">
    <property type="entry name" value="IG"/>
    <property type="match status" value="8"/>
</dbReference>
<dbReference type="SMART" id="SM00408">
    <property type="entry name" value="IGc2"/>
    <property type="match status" value="4"/>
</dbReference>
<dbReference type="SMART" id="SM00406">
    <property type="entry name" value="IGv"/>
    <property type="match status" value="4"/>
</dbReference>
<dbReference type="SUPFAM" id="SSF48726">
    <property type="entry name" value="Immunoglobulin"/>
    <property type="match status" value="7"/>
</dbReference>
<dbReference type="PROSITE" id="PS50835">
    <property type="entry name" value="IG_LIKE"/>
    <property type="match status" value="7"/>
</dbReference>
<evidence type="ECO:0000255" key="1"/>
<evidence type="ECO:0000255" key="2">
    <source>
        <dbReference type="PROSITE-ProRule" id="PRU00114"/>
    </source>
</evidence>
<evidence type="ECO:0000256" key="3">
    <source>
        <dbReference type="SAM" id="MobiDB-lite"/>
    </source>
</evidence>
<evidence type="ECO:0000269" key="4">
    <source>
    </source>
</evidence>
<evidence type="ECO:0000269" key="5">
    <source>
    </source>
</evidence>
<evidence type="ECO:0000303" key="6">
    <source>
    </source>
</evidence>
<evidence type="ECO:0000305" key="7"/>
<gene>
    <name type="primary">IGSF3</name>
    <name type="synonym">EWI3</name>
    <name type="synonym">KIAA0466</name>
</gene>
<keyword id="KW-0025">Alternative splicing</keyword>
<keyword id="KW-0160">Chromosomal rearrangement</keyword>
<keyword id="KW-1015">Disulfide bond</keyword>
<keyword id="KW-0325">Glycoprotein</keyword>
<keyword id="KW-0393">Immunoglobulin domain</keyword>
<keyword id="KW-0472">Membrane</keyword>
<keyword id="KW-1267">Proteomics identification</keyword>
<keyword id="KW-1185">Reference proteome</keyword>
<keyword id="KW-0677">Repeat</keyword>
<keyword id="KW-0732">Signal</keyword>
<keyword id="KW-0812">Transmembrane</keyword>
<keyword id="KW-1133">Transmembrane helix</keyword>
<feature type="signal peptide" evidence="1">
    <location>
        <begin position="1"/>
        <end position="19"/>
    </location>
</feature>
<feature type="chain" id="PRO_0000320134" description="Immunoglobulin superfamily member 3">
    <location>
        <begin position="20"/>
        <end position="1194"/>
    </location>
</feature>
<feature type="topological domain" description="Extracellular" evidence="1">
    <location>
        <begin position="20"/>
        <end position="1124"/>
    </location>
</feature>
<feature type="transmembrane region" description="Helical" evidence="1">
    <location>
        <begin position="1125"/>
        <end position="1145"/>
    </location>
</feature>
<feature type="topological domain" description="Cytoplasmic" evidence="1">
    <location>
        <begin position="1146"/>
        <end position="1194"/>
    </location>
</feature>
<feature type="domain" description="Ig-like C2-type 1">
    <location>
        <begin position="20"/>
        <end position="138"/>
    </location>
</feature>
<feature type="domain" description="Ig-like C2-type 2">
    <location>
        <begin position="143"/>
        <end position="262"/>
    </location>
</feature>
<feature type="domain" description="Ig-like C2-type 3">
    <location>
        <begin position="276"/>
        <end position="386"/>
    </location>
</feature>
<feature type="domain" description="Ig-like C2-type 4">
    <location>
        <begin position="401"/>
        <end position="539"/>
    </location>
</feature>
<feature type="domain" description="Ig-like C2-type 5">
    <location>
        <begin position="545"/>
        <end position="661"/>
    </location>
</feature>
<feature type="domain" description="Ig-like C2-type 6">
    <location>
        <begin position="676"/>
        <end position="803"/>
    </location>
</feature>
<feature type="domain" description="Ig-like C2-type 7">
    <location>
        <begin position="813"/>
        <end position="945"/>
    </location>
</feature>
<feature type="domain" description="Ig-like C2-type 8">
    <location>
        <begin position="949"/>
        <end position="1097"/>
    </location>
</feature>
<feature type="region of interest" description="Disordered" evidence="3">
    <location>
        <begin position="997"/>
        <end position="1033"/>
    </location>
</feature>
<feature type="short sequence motif" description="EWI motif">
    <location>
        <begin position="250"/>
        <end position="252"/>
    </location>
</feature>
<feature type="compositionally biased region" description="Acidic residues" evidence="3">
    <location>
        <begin position="1007"/>
        <end position="1027"/>
    </location>
</feature>
<feature type="glycosylation site" description="N-linked (GlcNAc...) asparagine" evidence="1">
    <location>
        <position position="43"/>
    </location>
</feature>
<feature type="glycosylation site" description="N-linked (GlcNAc...) asparagine" evidence="1">
    <location>
        <position position="418"/>
    </location>
</feature>
<feature type="glycosylation site" description="N-linked (GlcNAc...) asparagine" evidence="1">
    <location>
        <position position="655"/>
    </location>
</feature>
<feature type="glycosylation site" description="N-linked (GlcNAc...) asparagine" evidence="1">
    <location>
        <position position="842"/>
    </location>
</feature>
<feature type="glycosylation site" description="N-linked (GlcNAc...) asparagine" evidence="1">
    <location>
        <position position="1077"/>
    </location>
</feature>
<feature type="disulfide bond" evidence="2">
    <location>
        <begin position="42"/>
        <end position="120"/>
    </location>
</feature>
<feature type="disulfide bond" evidence="2">
    <location>
        <begin position="167"/>
        <end position="246"/>
    </location>
</feature>
<feature type="disulfide bond" evidence="2">
    <location>
        <begin position="302"/>
        <end position="376"/>
    </location>
</feature>
<feature type="disulfide bond" evidence="2">
    <location>
        <begin position="432"/>
        <end position="511"/>
    </location>
</feature>
<feature type="disulfide bond" evidence="2">
    <location>
        <begin position="566"/>
        <end position="645"/>
    </location>
</feature>
<feature type="disulfide bond" evidence="2">
    <location>
        <begin position="701"/>
        <end position="782"/>
    </location>
</feature>
<feature type="disulfide bond" evidence="2">
    <location>
        <begin position="838"/>
        <end position="918"/>
    </location>
</feature>
<feature type="disulfide bond" evidence="2">
    <location>
        <begin position="974"/>
        <end position="1080"/>
    </location>
</feature>
<feature type="splice variant" id="VSP_031609" description="In isoform 2." evidence="6">
    <original>LK</original>
    <variation>LTDNWVVKVPQHHQLLSQGHLE</variation>
    <location>
        <begin position="407"/>
        <end position="408"/>
    </location>
</feature>
<feature type="sequence variant" id="VAR_039134" description="In dbSNP:rs3965246.">
    <original>S</original>
    <variation>P</variation>
    <location>
        <position position="51"/>
    </location>
</feature>
<feature type="sequence variant" id="VAR_039135" description="In dbSNP:rs647711." evidence="5">
    <original>D</original>
    <variation>E</variation>
    <location>
        <position position="1020"/>
    </location>
</feature>
<feature type="sequence variant" id="VAR_039136" description="In dbSNP:rs6703791.">
    <original>Q</original>
    <variation>R</variation>
    <location>
        <position position="1073"/>
    </location>
</feature>
<feature type="sequence conflict" description="In Ref. 1; AAC72013." evidence="7" ref="1">
    <original>Y</original>
    <variation>S</variation>
    <location>
        <position position="932"/>
    </location>
</feature>
<feature type="sequence conflict" description="In Ref. 1; AAC72013." evidence="7" ref="1">
    <original>R</original>
    <variation>RE</variation>
    <location>
        <position position="1013"/>
    </location>
</feature>
<feature type="sequence conflict" description="In Ref. 1; AAC72013." evidence="7" ref="1">
    <original>S</original>
    <variation>N</variation>
    <location>
        <position position="1047"/>
    </location>
</feature>